<feature type="chain" id="PRO_1000066457" description="Orotidine 5'-phosphate decarboxylase">
    <location>
        <begin position="1"/>
        <end position="273"/>
    </location>
</feature>
<feature type="active site" description="Proton donor" evidence="1">
    <location>
        <position position="95"/>
    </location>
</feature>
<protein>
    <recommendedName>
        <fullName evidence="1">Orotidine 5'-phosphate decarboxylase</fullName>
        <ecNumber evidence="1">4.1.1.23</ecNumber>
    </recommendedName>
    <alternativeName>
        <fullName evidence="1">OMP decarboxylase</fullName>
        <shortName evidence="1">OMPDCase</shortName>
        <shortName evidence="1">OMPdecase</shortName>
    </alternativeName>
</protein>
<keyword id="KW-0210">Decarboxylase</keyword>
<keyword id="KW-0456">Lyase</keyword>
<keyword id="KW-0665">Pyrimidine biosynthesis</keyword>
<organism>
    <name type="scientific">Bordetella bronchiseptica (strain ATCC BAA-588 / NCTC 13252 / RB50)</name>
    <name type="common">Alcaligenes bronchisepticus</name>
    <dbReference type="NCBI Taxonomy" id="257310"/>
    <lineage>
        <taxon>Bacteria</taxon>
        <taxon>Pseudomonadati</taxon>
        <taxon>Pseudomonadota</taxon>
        <taxon>Betaproteobacteria</taxon>
        <taxon>Burkholderiales</taxon>
        <taxon>Alcaligenaceae</taxon>
        <taxon>Bordetella</taxon>
    </lineage>
</organism>
<reference key="1">
    <citation type="journal article" date="2003" name="Nat. Genet.">
        <title>Comparative analysis of the genome sequences of Bordetella pertussis, Bordetella parapertussis and Bordetella bronchiseptica.</title>
        <authorList>
            <person name="Parkhill J."/>
            <person name="Sebaihia M."/>
            <person name="Preston A."/>
            <person name="Murphy L.D."/>
            <person name="Thomson N.R."/>
            <person name="Harris D.E."/>
            <person name="Holden M.T.G."/>
            <person name="Churcher C.M."/>
            <person name="Bentley S.D."/>
            <person name="Mungall K.L."/>
            <person name="Cerdeno-Tarraga A.-M."/>
            <person name="Temple L."/>
            <person name="James K.D."/>
            <person name="Harris B."/>
            <person name="Quail M.A."/>
            <person name="Achtman M."/>
            <person name="Atkin R."/>
            <person name="Baker S."/>
            <person name="Basham D."/>
            <person name="Bason N."/>
            <person name="Cherevach I."/>
            <person name="Chillingworth T."/>
            <person name="Collins M."/>
            <person name="Cronin A."/>
            <person name="Davis P."/>
            <person name="Doggett J."/>
            <person name="Feltwell T."/>
            <person name="Goble A."/>
            <person name="Hamlin N."/>
            <person name="Hauser H."/>
            <person name="Holroyd S."/>
            <person name="Jagels K."/>
            <person name="Leather S."/>
            <person name="Moule S."/>
            <person name="Norberczak H."/>
            <person name="O'Neil S."/>
            <person name="Ormond D."/>
            <person name="Price C."/>
            <person name="Rabbinowitsch E."/>
            <person name="Rutter S."/>
            <person name="Sanders M."/>
            <person name="Saunders D."/>
            <person name="Seeger K."/>
            <person name="Sharp S."/>
            <person name="Simmonds M."/>
            <person name="Skelton J."/>
            <person name="Squares R."/>
            <person name="Squares S."/>
            <person name="Stevens K."/>
            <person name="Unwin L."/>
            <person name="Whitehead S."/>
            <person name="Barrell B.G."/>
            <person name="Maskell D.J."/>
        </authorList>
    </citation>
    <scope>NUCLEOTIDE SEQUENCE [LARGE SCALE GENOMIC DNA]</scope>
    <source>
        <strain>ATCC BAA-588 / NCTC 13252 / RB50</strain>
    </source>
</reference>
<sequence>MTFLKKLEHAWSASQSLLQVGLDPDPKRFPRELEGKPDAIFQFCRDIVDATAPYACSFKPQIAYFAAHRAEDQLEALCQHIRAQHPDLPIVLDAKRGDIGSTAENYAREAFERYQAHALTVSPYMGLDSVEPYLAWGDRGVIVLCRTSNPGGSDLQFLKMADGQPLYLHVAGLVADKWNANGQCGLVVGATFPNELAAVRQRIGDAVPLLVPGIGAQGGDINATVQAGANSAGAGMMINSSRAILYASTGEDWRQAAGEAARGLRDAINAVRT</sequence>
<accession>Q7WNS8</accession>
<comment type="catalytic activity">
    <reaction evidence="1">
        <text>orotidine 5'-phosphate + H(+) = UMP + CO2</text>
        <dbReference type="Rhea" id="RHEA:11596"/>
        <dbReference type="ChEBI" id="CHEBI:15378"/>
        <dbReference type="ChEBI" id="CHEBI:16526"/>
        <dbReference type="ChEBI" id="CHEBI:57538"/>
        <dbReference type="ChEBI" id="CHEBI:57865"/>
        <dbReference type="EC" id="4.1.1.23"/>
    </reaction>
</comment>
<comment type="pathway">
    <text evidence="1">Pyrimidine metabolism; UMP biosynthesis via de novo pathway; UMP from orotate: step 2/2.</text>
</comment>
<comment type="similarity">
    <text evidence="1">Belongs to the OMP decarboxylase family. Type 2 subfamily.</text>
</comment>
<evidence type="ECO:0000255" key="1">
    <source>
        <dbReference type="HAMAP-Rule" id="MF_01215"/>
    </source>
</evidence>
<gene>
    <name evidence="1" type="primary">pyrF</name>
    <name type="ordered locus">BB0957</name>
</gene>
<proteinExistence type="inferred from homology"/>
<dbReference type="EC" id="4.1.1.23" evidence="1"/>
<dbReference type="EMBL" id="BX640439">
    <property type="protein sequence ID" value="CAE31456.1"/>
    <property type="molecule type" value="Genomic_DNA"/>
</dbReference>
<dbReference type="RefSeq" id="WP_003808606.1">
    <property type="nucleotide sequence ID" value="NC_002927.3"/>
</dbReference>
<dbReference type="SMR" id="Q7WNS8"/>
<dbReference type="GeneID" id="93202613"/>
<dbReference type="KEGG" id="bbr:BB0957"/>
<dbReference type="eggNOG" id="COG0284">
    <property type="taxonomic scope" value="Bacteria"/>
</dbReference>
<dbReference type="HOGENOM" id="CLU_060704_1_0_4"/>
<dbReference type="UniPathway" id="UPA00070">
    <property type="reaction ID" value="UER00120"/>
</dbReference>
<dbReference type="Proteomes" id="UP000001027">
    <property type="component" value="Chromosome"/>
</dbReference>
<dbReference type="GO" id="GO:0004590">
    <property type="term" value="F:orotidine-5'-phosphate decarboxylase activity"/>
    <property type="evidence" value="ECO:0007669"/>
    <property type="project" value="UniProtKB-UniRule"/>
</dbReference>
<dbReference type="GO" id="GO:0006207">
    <property type="term" value="P:'de novo' pyrimidine nucleobase biosynthetic process"/>
    <property type="evidence" value="ECO:0007669"/>
    <property type="project" value="InterPro"/>
</dbReference>
<dbReference type="GO" id="GO:0044205">
    <property type="term" value="P:'de novo' UMP biosynthetic process"/>
    <property type="evidence" value="ECO:0007669"/>
    <property type="project" value="UniProtKB-UniRule"/>
</dbReference>
<dbReference type="CDD" id="cd04725">
    <property type="entry name" value="OMP_decarboxylase_like"/>
    <property type="match status" value="1"/>
</dbReference>
<dbReference type="Gene3D" id="3.20.20.70">
    <property type="entry name" value="Aldolase class I"/>
    <property type="match status" value="1"/>
</dbReference>
<dbReference type="HAMAP" id="MF_01215">
    <property type="entry name" value="OMPdecase_type2"/>
    <property type="match status" value="1"/>
</dbReference>
<dbReference type="InterPro" id="IPR013785">
    <property type="entry name" value="Aldolase_TIM"/>
</dbReference>
<dbReference type="InterPro" id="IPR018089">
    <property type="entry name" value="OMPdecase_AS"/>
</dbReference>
<dbReference type="InterPro" id="IPR011995">
    <property type="entry name" value="OMPdecase_type-2"/>
</dbReference>
<dbReference type="InterPro" id="IPR001754">
    <property type="entry name" value="OMPdeCOase_dom"/>
</dbReference>
<dbReference type="InterPro" id="IPR011060">
    <property type="entry name" value="RibuloseP-bd_barrel"/>
</dbReference>
<dbReference type="NCBIfam" id="TIGR02127">
    <property type="entry name" value="pyrF_sub2"/>
    <property type="match status" value="1"/>
</dbReference>
<dbReference type="PANTHER" id="PTHR43375">
    <property type="entry name" value="OROTIDINE 5'-PHOSPHATE DECARBOXYLASE"/>
    <property type="match status" value="1"/>
</dbReference>
<dbReference type="PANTHER" id="PTHR43375:SF1">
    <property type="entry name" value="OROTIDINE 5'-PHOSPHATE DECARBOXYLASE"/>
    <property type="match status" value="1"/>
</dbReference>
<dbReference type="Pfam" id="PF00215">
    <property type="entry name" value="OMPdecase"/>
    <property type="match status" value="1"/>
</dbReference>
<dbReference type="SMART" id="SM00934">
    <property type="entry name" value="OMPdecase"/>
    <property type="match status" value="1"/>
</dbReference>
<dbReference type="SUPFAM" id="SSF51366">
    <property type="entry name" value="Ribulose-phoshate binding barrel"/>
    <property type="match status" value="1"/>
</dbReference>
<dbReference type="PROSITE" id="PS00156">
    <property type="entry name" value="OMPDECASE"/>
    <property type="match status" value="1"/>
</dbReference>
<name>PYRF_BORBR</name>